<evidence type="ECO:0000255" key="1">
    <source>
        <dbReference type="HAMAP-Rule" id="MF_00135"/>
    </source>
</evidence>
<feature type="chain" id="PRO_1000076433" description="N-(5'-phosphoribosyl)anthranilate isomerase">
    <location>
        <begin position="1"/>
        <end position="222"/>
    </location>
</feature>
<proteinExistence type="inferred from homology"/>
<gene>
    <name evidence="1" type="primary">trpF</name>
    <name type="ordered locus">BCAN_A2155</name>
</gene>
<organism>
    <name type="scientific">Brucella canis (strain ATCC 23365 / NCTC 10854 / RM-666)</name>
    <dbReference type="NCBI Taxonomy" id="483179"/>
    <lineage>
        <taxon>Bacteria</taxon>
        <taxon>Pseudomonadati</taxon>
        <taxon>Pseudomonadota</taxon>
        <taxon>Alphaproteobacteria</taxon>
        <taxon>Hyphomicrobiales</taxon>
        <taxon>Brucellaceae</taxon>
        <taxon>Brucella/Ochrobactrum group</taxon>
        <taxon>Brucella</taxon>
    </lineage>
</organism>
<keyword id="KW-0028">Amino-acid biosynthesis</keyword>
<keyword id="KW-0057">Aromatic amino acid biosynthesis</keyword>
<keyword id="KW-0413">Isomerase</keyword>
<keyword id="KW-1185">Reference proteome</keyword>
<keyword id="KW-0822">Tryptophan biosynthesis</keyword>
<comment type="catalytic activity">
    <reaction evidence="1">
        <text>N-(5-phospho-beta-D-ribosyl)anthranilate = 1-(2-carboxyphenylamino)-1-deoxy-D-ribulose 5-phosphate</text>
        <dbReference type="Rhea" id="RHEA:21540"/>
        <dbReference type="ChEBI" id="CHEBI:18277"/>
        <dbReference type="ChEBI" id="CHEBI:58613"/>
        <dbReference type="EC" id="5.3.1.24"/>
    </reaction>
</comment>
<comment type="pathway">
    <text evidence="1">Amino-acid biosynthesis; L-tryptophan biosynthesis; L-tryptophan from chorismate: step 3/5.</text>
</comment>
<comment type="similarity">
    <text evidence="1">Belongs to the TrpF family.</text>
</comment>
<protein>
    <recommendedName>
        <fullName evidence="1">N-(5'-phosphoribosyl)anthranilate isomerase</fullName>
        <shortName evidence="1">PRAI</shortName>
        <ecNumber evidence="1">5.3.1.24</ecNumber>
    </recommendedName>
</protein>
<accession>A9M9U3</accession>
<sequence>MALDIKICGLKTPEAVAAALDGGATHIGFIFFPKSPRHITPDAAARLRAAATGRAVAVAVTVDADDEALDEIVKTVRPDMLQLHGGETPERVRFLKERYNLPVMKAFSIREAGDLEAIAPYRGIADRFLFDAKPPKGSELPGGNGISFDWNLLAALDADIDYMLSGGLNADNIAEALLKTGAPGIDISSGVECAPGEKDVRLIENFFQAVADANAQPFARRA</sequence>
<reference key="1">
    <citation type="submission" date="2007-10" db="EMBL/GenBank/DDBJ databases">
        <title>Brucella canis ATCC 23365 whole genome shotgun sequencing project.</title>
        <authorList>
            <person name="Setubal J.C."/>
            <person name="Bowns C."/>
            <person name="Boyle S."/>
            <person name="Crasta O.R."/>
            <person name="Czar M.J."/>
            <person name="Dharmanolla C."/>
            <person name="Gillespie J.J."/>
            <person name="Kenyon R.W."/>
            <person name="Lu J."/>
            <person name="Mane S."/>
            <person name="Mohapatra S."/>
            <person name="Nagrani S."/>
            <person name="Purkayastha A."/>
            <person name="Rajasimha H.K."/>
            <person name="Shallom J.M."/>
            <person name="Shallom S."/>
            <person name="Shukla M."/>
            <person name="Snyder E.E."/>
            <person name="Sobral B.W."/>
            <person name="Wattam A.R."/>
            <person name="Will R."/>
            <person name="Williams K."/>
            <person name="Yoo H."/>
            <person name="Bruce D."/>
            <person name="Detter C."/>
            <person name="Munk C."/>
            <person name="Brettin T.S."/>
        </authorList>
    </citation>
    <scope>NUCLEOTIDE SEQUENCE [LARGE SCALE GENOMIC DNA]</scope>
    <source>
        <strain>ATCC 23365 / NCTC 10854 / RM-666</strain>
    </source>
</reference>
<dbReference type="EC" id="5.3.1.24" evidence="1"/>
<dbReference type="EMBL" id="CP000872">
    <property type="protein sequence ID" value="ABX63138.1"/>
    <property type="molecule type" value="Genomic_DNA"/>
</dbReference>
<dbReference type="RefSeq" id="WP_002965175.1">
    <property type="nucleotide sequence ID" value="NC_010103.1"/>
</dbReference>
<dbReference type="SMR" id="A9M9U3"/>
<dbReference type="KEGG" id="bcs:BCAN_A2155"/>
<dbReference type="HOGENOM" id="CLU_076364_1_1_5"/>
<dbReference type="PhylomeDB" id="A9M9U3"/>
<dbReference type="UniPathway" id="UPA00035">
    <property type="reaction ID" value="UER00042"/>
</dbReference>
<dbReference type="Proteomes" id="UP000001385">
    <property type="component" value="Chromosome I"/>
</dbReference>
<dbReference type="GO" id="GO:0004640">
    <property type="term" value="F:phosphoribosylanthranilate isomerase activity"/>
    <property type="evidence" value="ECO:0007669"/>
    <property type="project" value="UniProtKB-UniRule"/>
</dbReference>
<dbReference type="GO" id="GO:0000162">
    <property type="term" value="P:L-tryptophan biosynthetic process"/>
    <property type="evidence" value="ECO:0007669"/>
    <property type="project" value="UniProtKB-UniRule"/>
</dbReference>
<dbReference type="CDD" id="cd00405">
    <property type="entry name" value="PRAI"/>
    <property type="match status" value="1"/>
</dbReference>
<dbReference type="Gene3D" id="3.20.20.70">
    <property type="entry name" value="Aldolase class I"/>
    <property type="match status" value="1"/>
</dbReference>
<dbReference type="HAMAP" id="MF_00135">
    <property type="entry name" value="PRAI"/>
    <property type="match status" value="1"/>
</dbReference>
<dbReference type="InterPro" id="IPR013785">
    <property type="entry name" value="Aldolase_TIM"/>
</dbReference>
<dbReference type="InterPro" id="IPR001240">
    <property type="entry name" value="PRAI_dom"/>
</dbReference>
<dbReference type="InterPro" id="IPR011060">
    <property type="entry name" value="RibuloseP-bd_barrel"/>
</dbReference>
<dbReference type="InterPro" id="IPR044643">
    <property type="entry name" value="TrpF_fam"/>
</dbReference>
<dbReference type="NCBIfam" id="NF002295">
    <property type="entry name" value="PRK01222.1-1"/>
    <property type="match status" value="1"/>
</dbReference>
<dbReference type="PANTHER" id="PTHR42894">
    <property type="entry name" value="N-(5'-PHOSPHORIBOSYL)ANTHRANILATE ISOMERASE"/>
    <property type="match status" value="1"/>
</dbReference>
<dbReference type="PANTHER" id="PTHR42894:SF1">
    <property type="entry name" value="N-(5'-PHOSPHORIBOSYL)ANTHRANILATE ISOMERASE"/>
    <property type="match status" value="1"/>
</dbReference>
<dbReference type="Pfam" id="PF00697">
    <property type="entry name" value="PRAI"/>
    <property type="match status" value="1"/>
</dbReference>
<dbReference type="SUPFAM" id="SSF51366">
    <property type="entry name" value="Ribulose-phoshate binding barrel"/>
    <property type="match status" value="1"/>
</dbReference>
<name>TRPF_BRUC2</name>